<keyword id="KW-0002">3D-structure</keyword>
<keyword id="KW-0007">Acetylation</keyword>
<keyword id="KW-0010">Activator</keyword>
<keyword id="KW-0025">Alternative splicing</keyword>
<keyword id="KW-0051">Antiviral defense</keyword>
<keyword id="KW-0963">Cytoplasm</keyword>
<keyword id="KW-0225">Disease variant</keyword>
<keyword id="KW-0238">DNA-binding</keyword>
<keyword id="KW-0945">Host-virus interaction</keyword>
<keyword id="KW-0391">Immunity</keyword>
<keyword id="KW-0399">Innate immunity</keyword>
<keyword id="KW-1017">Isopeptide bond</keyword>
<keyword id="KW-0539">Nucleus</keyword>
<keyword id="KW-0597">Phosphoprotein</keyword>
<keyword id="KW-1267">Proteomics identification</keyword>
<keyword id="KW-1185">Reference proteome</keyword>
<keyword id="KW-0804">Transcription</keyword>
<keyword id="KW-0805">Transcription regulation</keyword>
<keyword id="KW-0832">Ubl conjugation</keyword>
<accession>Q92985</accession>
<accession>B9EGL3</accession>
<accession>O00331</accession>
<accession>O00332</accession>
<accession>O00333</accession>
<accession>O75924</accession>
<accession>Q9UE79</accession>
<name>IRF7_HUMAN</name>
<sequence length="503" mass="54278">MALAPERAAPRVLFGEWLLGEISSGCYEGLQWLDEARTCFRVPWKHFARKDLSEADARIFKAWAVARGRWPPSSRGGGPPPEAETAERAGWKTNFRCALRSTRRFVMLRDNSGDPADPHKVYALSRELCWREGPGTDQTEAEAPAAVPPPQGGPPGPFLAHTHAGLQAPGPLPAPAGDKGDLLLQAVQQSCLADHLLTASWGADPVPTKAPGEGQEGLPLTGACAGGPGLPAGELYGWAVETTPSPGPQPAALTTGEAAAPESPHQAEPYLSPSPSACTAVQEPSPGALDVTIMYKGRTVLQKVVGHPSCTFLYGPPDPAVRATDPQQVAFPSPAELPDQKQLRYTEELLRHVAPGLHLELRGPQLWARRMGKCKVYWEVGGPPGSASPSTPACLLPRNCDTPIFDFRVFFQELVEFRARQRRGSPRYTIYLGFGQDLSAGRPKEKSLVLVKLEPWLCRVHLEGTQREGVSSLDSSSLSLCLSSANSLYDDIECFLMELEQPA</sequence>
<comment type="function">
    <text evidence="1 4 7 10 15 16 26 27 31">Key transcriptional regulator of type I interferon (IFN)-dependent immune responses and plays a critical role in the innate immune response against DNA and RNA viruses (PubMed:28342865, PubMed:28768858). Regulates the transcription of type I IFN genes (IFN-alpha and IFN-beta) and IFN-stimulated genes (ISG) by binding to an interferon-stimulated response element (ISRE) in their promoters (PubMed:17574024, PubMed:32972995). Can efficiently activate both the IFN-beta (IFNB) and the IFN-alpha (IFNA) genes and mediate their induction via both the virus-activated, MyD88-independent pathway and the TLR-activated, MyD88-dependent pathway. Induces transcription of ubiquitin hydrolase USP25 mRNA in response to lipopolysaccharide (LPS) or viral infection in a type I IFN-dependent manner (By similarity). Required during both the early and late phases of the IFN gene induction but is more critical for the late than for the early phase. Exists in an inactive form in the cytoplasm of uninfected cells and following viral infection, double-stranded RNA (dsRNA), or toll-like receptor (TLR) signaling, becomes phosphorylated by IKBKE and TBK1 kinases. This induces a conformational change, leading to its dimerization and nuclear localization where along with other coactivators it can activate transcription of the type I IFN and ISG genes. Can also play a role in regulating adaptive immune responses by inducing PSMB9/LMP2 expression, either directly or through induction of IRF1. Binds to the Q promoter (Qp) of EBV nuclear antigen 1 a (EBNA1) and may play a role in the regulation of EBV latency. Can activate distinct gene expression programs in macrophages and regulate the anti-tumor properties of primary macrophages (By similarity) (PubMed:11073981, PubMed:12374802, PubMed:15361868, PubMed:17404045).</text>
</comment>
<comment type="activity regulation">
    <text>In the absence of viral infection, maintained as a monomer in an autoinhibited state and phosphorylation disrupts this autoinhibition leading to the liberation of the DNA-binding and dimerization activities and its nuclear localization where it can activate type I IFN and ISG genes.</text>
</comment>
<comment type="subunit">
    <text evidence="1 4 5 8 9 10 12 16 24">Monomer. Homodimer; phosphorylation-induced. Heterodimer with IRF3 (PubMed:17574024). Interacts with TICAM1 and TICAM2. Interacts with MYD88 and TRAF6. Interacts with TRIM35 (PubMed:11073981, PubMed:11314014, PubMed:14517278, PubMed:14739303, PubMed:15361868, PubMed:15492225, PubMed:25907537). Interacts with NMI; the interaction is direct and leads to the inhibition of IRF7-mediated type I IFN production (By similarity). Interacts with GBP4; preventing interaction between TRAF6 and IRF7, resulting in impaired TRAF6-mediated IRF7 ubiquitination (By similarity).</text>
</comment>
<comment type="subunit">
    <text evidence="17 18">(Microbial infection) Interacts with Epstein-Barr virus LF2 and LMP1.</text>
</comment>
<comment type="subunit">
    <text evidence="14">(Microbial infection) Interacts with rotavirus A NSP1; this interaction leads to the proteasome-dependent degradation of IRF7.</text>
</comment>
<comment type="subunit">
    <text evidence="6">(Microbial infection) Interacts with human herpes virus 8/HHV-8 proteins ORF45 and vIRF-1.</text>
</comment>
<comment type="subunit">
    <text evidence="28">(Microbial infection) Interacts with human T-cell leukemia virus 1/HTLV-1 protein HBZ.</text>
</comment>
<comment type="subunit">
    <text evidence="29">(Microbial infection) Interacts with Seneca Valley virus protease 3C; this interaction is involved in the suppression of IRF7 expression and phosphorylation by the virus.</text>
</comment>
<comment type="subunit">
    <text evidence="19">(Microbial infection) Interacts with ebolavirus VP35; this interaction mediates the sumoylation of IRF7 and contributes to the viral inhibition of IFN-type I production.</text>
</comment>
<comment type="subunit">
    <text evidence="30">(Microbial infection) Interacts with severe fever with thrombocytopenia syndrome virus (SFTSV) NSs; this interaction sequesters IRF7 in NSs-induced cytoplasmic inclusion bodies.</text>
</comment>
<comment type="subunit">
    <text evidence="26">(Microbial infection) Interacts with herpes virus 8/HHV-8 protein vIRF-4; this interaction prevents IRF7 dimerization and subsequent activation (PubMed:28342865).</text>
</comment>
<comment type="subunit">
    <text evidence="27">(Microbial infection) Interacts with human metapneumovirus protein M2-2; this interaction prevents IRF7 phosphorlyation and subsequent TLR7/9-dependent IFN-alpha induction.</text>
</comment>
<comment type="interaction">
    <interactant intactId="EBI-968267">
        <id>Q92985</id>
    </interactant>
    <interactant intactId="EBI-704197">
        <id>O00170</id>
        <label>AIP</label>
    </interactant>
    <organismsDiffer>false</organismsDiffer>
    <experiments>2</experiments>
</comment>
<comment type="interaction">
    <interactant intactId="EBI-968267">
        <id>Q92985</id>
    </interactant>
    <interactant intactId="EBI-365961">
        <id>P10398</id>
        <label>ARAF</label>
    </interactant>
    <organismsDiffer>false</organismsDiffer>
    <experiments>2</experiments>
</comment>
<comment type="interaction">
    <interactant intactId="EBI-968267">
        <id>Q92985</id>
    </interactant>
    <interactant intactId="EBI-720151">
        <id>Q96A33</id>
        <label>CCDC47</label>
    </interactant>
    <organismsDiffer>false</organismsDiffer>
    <experiments>2</experiments>
</comment>
<comment type="interaction">
    <interactant intactId="EBI-968267">
        <id>Q92985</id>
    </interactant>
    <interactant intactId="EBI-81249">
        <id>O15111</id>
        <label>CHUK</label>
    </interactant>
    <organismsDiffer>false</organismsDiffer>
    <experiments>4</experiments>
</comment>
<comment type="interaction">
    <interactant intactId="EBI-968267">
        <id>Q92985</id>
    </interactant>
    <interactant intactId="EBI-358664">
        <id>P51617</id>
        <label>IRAK1</label>
    </interactant>
    <organismsDiffer>false</organismsDiffer>
    <experiments>2</experiments>
</comment>
<comment type="interaction">
    <interactant intactId="EBI-968267">
        <id>Q92985</id>
    </interactant>
    <interactant intactId="EBI-1044684">
        <id>O94822</id>
        <label>LTN1</label>
    </interactant>
    <organismsDiffer>false</organismsDiffer>
    <experiments>2</experiments>
</comment>
<comment type="interaction">
    <interactant intactId="EBI-968267">
        <id>Q92985</id>
    </interactant>
    <interactant intactId="EBI-3957166">
        <id>Q9ULE6</id>
        <label>PALD1</label>
    </interactant>
    <organismsDiffer>false</organismsDiffer>
    <experiments>2</experiments>
</comment>
<comment type="interaction">
    <interactant intactId="EBI-968267">
        <id>Q92985</id>
    </interactant>
    <interactant intactId="EBI-356402">
        <id>Q9UHD2</id>
        <label>TBK1</label>
    </interactant>
    <organismsDiffer>false</organismsDiffer>
    <experiments>2</experiments>
</comment>
<comment type="interaction">
    <interactant intactId="EBI-968267">
        <id>Q92985</id>
    </interactant>
    <interactant intactId="EBI-1047967">
        <id>Q86UE8</id>
        <label>TLK2</label>
    </interactant>
    <organismsDiffer>false</organismsDiffer>
    <experiments>2</experiments>
</comment>
<comment type="interaction">
    <interactant intactId="EBI-968267">
        <id>Q92985</id>
    </interactant>
    <interactant intactId="EBI-3197877">
        <id>Q9BVS5</id>
        <label>TRMT61B</label>
    </interactant>
    <organismsDiffer>false</organismsDiffer>
    <experiments>3</experiments>
</comment>
<comment type="interaction">
    <interactant intactId="EBI-968267">
        <id>Q92985</id>
    </interactant>
    <interactant intactId="EBI-11292028">
        <id>P29128</id>
        <label>BICP0</label>
    </interactant>
    <organismsDiffer>true</organismsDiffer>
    <experiments>5</experiments>
</comment>
<comment type="interaction">
    <interactant intactId="EBI-968267">
        <id>Q92985</id>
    </interactant>
    <interactant intactId="EBI-8843990">
        <id>F5HDE4</id>
        <label>ORF45</label>
    </interactant>
    <organismsDiffer>true</organismsDiffer>
    <experiments>3</experiments>
</comment>
<comment type="interaction">
    <interactant intactId="EBI-968267">
        <id>Q92985</id>
    </interactant>
    <interactant intactId="EBI-6149376">
        <id>Q77M19</id>
        <label>P</label>
    </interactant>
    <organismsDiffer>true</organismsDiffer>
    <experiments>3</experiments>
</comment>
<comment type="interaction">
    <interactant intactId="EBI-8850881">
        <id>Q92985-1</id>
    </interactant>
    <interactant intactId="EBI-6973030">
        <id>P03230</id>
        <label>LMP1</label>
    </interactant>
    <organismsDiffer>true</organismsDiffer>
    <experiments>5</experiments>
</comment>
<comment type="subcellular location">
    <subcellularLocation>
        <location>Nucleus</location>
    </subcellularLocation>
    <subcellularLocation>
        <location>Cytoplasm</location>
    </subcellularLocation>
    <text>The phosphorylated and active form accumulates selectively in the nucleus.</text>
</comment>
<comment type="alternative products">
    <event type="alternative splicing"/>
    <isoform>
        <id>Q92985-1</id>
        <name>A</name>
        <sequence type="displayed"/>
    </isoform>
    <isoform>
        <id>Q92985-2</id>
        <name>B</name>
        <name>Beta</name>
        <sequence type="described" ref="VSP_002760"/>
    </isoform>
    <isoform>
        <id>Q92985-3</id>
        <name>C</name>
        <name>Gamma</name>
        <sequence type="described" ref="VSP_002758 VSP_002759"/>
    </isoform>
    <isoform>
        <id>Q92985-4</id>
        <name>D</name>
        <name>H</name>
        <sequence type="described" ref="VSP_002757"/>
    </isoform>
</comment>
<comment type="tissue specificity">
    <text>Expressed predominantly in spleen, thymus and peripheral blood leukocytes.</text>
</comment>
<comment type="induction">
    <text>By type I interferon (IFN) and viruses.</text>
</comment>
<comment type="PTM">
    <text evidence="7">Acetylation inhibits its DNA-binding ability and activity.</text>
</comment>
<comment type="PTM">
    <text evidence="4 7 11 13">In response to a viral infection, phosphorylated on Ser-477 and Ser-479 by TBK1 and IKBKE1. Phosphorylation, and subsequent activation is inhibited by vaccinia virus protein E3. In TLR7- and TLR9-mediated signaling pathway, phosphorylated by IRAK1.</text>
</comment>
<comment type="PTM">
    <text evidence="1 20 24">TRAF6-mediated ubiquitination is required for IRF7 activation (By similarity). TRIM35 mediates IRF7 'Lys-48'-linked polyubiquitination and subsequent proteasomal degradation (PubMed:25907537). Ubiquitinated by UBE3C, leading to its degradation (PubMed:21167755).</text>
</comment>
<comment type="PTM">
    <text evidence="21">Sumoylated by TRIM28, which inhibits its transactivation activity.</text>
</comment>
<comment type="PTM">
    <text evidence="22">(Microbial infection) Cleaved and inactivated by the protease 3C of enterovirus 71 allowing the virus to disrupt the host type I interferon production.</text>
</comment>
<comment type="PTM">
    <text evidence="25">(Microbial infection) Cleaved and inactivated by the protease 3C of human enterovirus 68D (EV68) allowing the virus to disrupt the host type I interferon production.</text>
</comment>
<comment type="PTM">
    <text evidence="1">'Lys-48'-linked polyubiquitination and subsequent proteasomal degradation is NMI-dependent in response to Sendai virus infection.</text>
</comment>
<comment type="PTM">
    <text evidence="32">'Lys-63'-linked ubiquitination by NEURL3 promotes IRF7 activation.</text>
</comment>
<comment type="disease" evidence="23">
    <disease id="DI-04423">
        <name>Immunodeficiency 39</name>
        <acronym>IMD39</acronym>
        <description>A primary immunodeficiency causing severe, life-threatening acute respiratory distress upon infection with H1N1 influenza A.</description>
        <dbReference type="MIM" id="616345"/>
    </disease>
    <text>The disease is caused by variants affecting the gene represented in this entry.</text>
</comment>
<comment type="miscellaneous">
    <molecule>Isoform C</molecule>
    <text evidence="38">May be produced at very low levels due to a premature stop codon in the mRNA, leading to nonsense-mediated mRNA decay.</text>
</comment>
<comment type="similarity">
    <text evidence="2">Belongs to the IRF family.</text>
</comment>
<organism>
    <name type="scientific">Homo sapiens</name>
    <name type="common">Human</name>
    <dbReference type="NCBI Taxonomy" id="9606"/>
    <lineage>
        <taxon>Eukaryota</taxon>
        <taxon>Metazoa</taxon>
        <taxon>Chordata</taxon>
        <taxon>Craniata</taxon>
        <taxon>Vertebrata</taxon>
        <taxon>Euteleostomi</taxon>
        <taxon>Mammalia</taxon>
        <taxon>Eutheria</taxon>
        <taxon>Euarchontoglires</taxon>
        <taxon>Primates</taxon>
        <taxon>Haplorrhini</taxon>
        <taxon>Catarrhini</taxon>
        <taxon>Hominidae</taxon>
        <taxon>Homo</taxon>
    </lineage>
</organism>
<reference key="1">
    <citation type="submission" date="1996-10" db="EMBL/GenBank/DDBJ databases">
        <authorList>
            <person name="Grossman A."/>
            <person name="Nicholl J."/>
            <person name="Antonio L."/>
            <person name="Luethy R."/>
            <person name="Suggs S."/>
            <person name="Sutherland G.R."/>
            <person name="Mak T.W."/>
        </authorList>
    </citation>
    <scope>NUCLEOTIDE SEQUENCE [MRNA] (ISOFORM A)</scope>
    <scope>VARIANT GLU-179</scope>
    <source>
        <tissue>Spleen</tissue>
    </source>
</reference>
<reference key="2">
    <citation type="journal article" date="1997" name="Mol. Cell. Biol.">
        <title>IRF-7, a new interferon regulatory factor associated with Epstein-Barr virus latency.</title>
        <authorList>
            <person name="Zhang L."/>
            <person name="Pagano J.S."/>
        </authorList>
    </citation>
    <scope>NUCLEOTIDE SEQUENCE [MRNA] (ISOFORMS A; B AND C)</scope>
</reference>
<reference key="3">
    <citation type="journal article" date="1998" name="J. Biol. Chem.">
        <title>Characterization of the interferon regulatory factor-7 and its potential role in the transcription activation of interferon A genes.</title>
        <authorList>
            <person name="Au W.-C."/>
            <person name="Moore P.A."/>
            <person name="LaFleur D.W."/>
            <person name="Tombal B."/>
            <person name="Pitha P.M."/>
        </authorList>
    </citation>
    <scope>NUCLEOTIDE SEQUENCE [MRNA] (ISOFORM D)</scope>
    <scope>VARIANTS GLU-179 AND ARG-412</scope>
</reference>
<reference key="4">
    <citation type="submission" date="2005-07" db="EMBL/GenBank/DDBJ databases">
        <authorList>
            <person name="Mural R.J."/>
            <person name="Istrail S."/>
            <person name="Sutton G.G."/>
            <person name="Florea L."/>
            <person name="Halpern A.L."/>
            <person name="Mobarry C.M."/>
            <person name="Lippert R."/>
            <person name="Walenz B."/>
            <person name="Shatkay H."/>
            <person name="Dew I."/>
            <person name="Miller J.R."/>
            <person name="Flanigan M.J."/>
            <person name="Edwards N.J."/>
            <person name="Bolanos R."/>
            <person name="Fasulo D."/>
            <person name="Halldorsson B.V."/>
            <person name="Hannenhalli S."/>
            <person name="Turner R."/>
            <person name="Yooseph S."/>
            <person name="Lu F."/>
            <person name="Nusskern D.R."/>
            <person name="Shue B.C."/>
            <person name="Zheng X.H."/>
            <person name="Zhong F."/>
            <person name="Delcher A.L."/>
            <person name="Huson D.H."/>
            <person name="Kravitz S.A."/>
            <person name="Mouchard L."/>
            <person name="Reinert K."/>
            <person name="Remington K.A."/>
            <person name="Clark A.G."/>
            <person name="Waterman M.S."/>
            <person name="Eichler E.E."/>
            <person name="Adams M.D."/>
            <person name="Hunkapiller M.W."/>
            <person name="Myers E.W."/>
            <person name="Venter J.C."/>
        </authorList>
    </citation>
    <scope>NUCLEOTIDE SEQUENCE [LARGE SCALE GENOMIC DNA]</scope>
</reference>
<reference key="5">
    <citation type="journal article" date="2004" name="Genome Res.">
        <title>The status, quality, and expansion of the NIH full-length cDNA project: the Mammalian Gene Collection (MGC).</title>
        <authorList>
            <consortium name="The MGC Project Team"/>
        </authorList>
    </citation>
    <scope>NUCLEOTIDE SEQUENCE [LARGE SCALE MRNA] (ISOFORM D)</scope>
</reference>
<reference key="6">
    <citation type="journal article" date="2000" name="Mol. Cell. Biol.">
        <title>Phosphorylation-induced dimerization of interferon regulatory factor 7 unmasks DNA binding and a bipartite transactivation domain.</title>
        <authorList>
            <person name="Marie I.J."/>
            <person name="Smith E."/>
            <person name="Prakash A."/>
            <person name="Levy D.E."/>
        </authorList>
    </citation>
    <scope>FUNCTION</scope>
    <scope>PHOSPHORYLATION</scope>
    <scope>SUBCELLULAR LOCATION</scope>
    <scope>SUBUNIT</scope>
</reference>
<reference key="7">
    <citation type="journal article" date="2001" name="J. Biol. Chem.">
        <title>IRF3 and IRF7 phosphorylation in virus-infected cells does not require double-stranded RNA-dependent protein kinase R or Ikappa B kinase but is blocked by Vaccinia virus E3L protein.</title>
        <authorList>
            <person name="Smith E.J."/>
            <person name="Marie I.J."/>
            <person name="Prakash A."/>
            <person name="Garcia-Sastre A."/>
            <person name="Levy D.E."/>
        </authorList>
    </citation>
    <scope>INHIBITION OF PHOSPHORYLATION BY VACCINIA VIRUS PROTEIN E3</scope>
</reference>
<reference key="8">
    <citation type="journal article" date="2001" name="Oncogene">
        <title>HHV-8 encoded vIRF-1 represses the interferon antiviral response by blocking IRF-3 recruitment of the CBP/p300 coactivators.</title>
        <authorList>
            <person name="Lin R."/>
            <person name="Genin P."/>
            <person name="Mamane Y."/>
            <person name="Sgarbanti M."/>
            <person name="Battistini A."/>
            <person name="Harrington W.J. Jr."/>
            <person name="Barber G.N."/>
            <person name="Hiscott J."/>
        </authorList>
    </citation>
    <scope>INTERACTION WITH HHV-8 PROTEIN VIRF1</scope>
</reference>
<reference key="9">
    <citation type="journal article" date="2002" name="J. Biol. Chem.">
        <title>Acetylation of interferon regulatory factor-7 by p300/CREB-binding protein (CBP)-associated factor (PCAF) impairs its DNA binding.</title>
        <authorList>
            <person name="Caillaud A."/>
            <person name="Prakash A."/>
            <person name="Smith E."/>
            <person name="Masumi A."/>
            <person name="Hovanessian A.G."/>
            <person name="Levy D.E."/>
            <person name="Marie I."/>
        </authorList>
    </citation>
    <scope>FUNCTION</scope>
    <scope>ACETYLATION AT LYS-92</scope>
    <scope>MUTAGENESIS OF GLY-90; LYS-92 AND THR-93</scope>
    <scope>PHOSPHORYLATION</scope>
</reference>
<reference key="10">
    <citation type="journal article" date="2002" name="J. Interferon Cytokine Res.">
        <title>Structure and function of IRF-7.</title>
        <authorList>
            <person name="Zhang L."/>
            <person name="Pagano J.S."/>
        </authorList>
    </citation>
    <scope>REVIEW ON FUNCTION</scope>
</reference>
<reference key="11">
    <citation type="journal article" date="2002" name="Proc. Natl. Acad. Sci. U.S.A.">
        <title>A Kaposi's sarcoma-associated herpesviral protein inhibits virus-mediated induction of type I interferon by blocking IRF-7 phosphorylation and nuclear accumulation.</title>
        <authorList>
            <person name="Zhu F.X."/>
            <person name="King S.M."/>
            <person name="Smith E.J."/>
            <person name="Levy D.E."/>
            <person name="Yuan Y."/>
        </authorList>
    </citation>
    <scope>INTERACTION WITH HHV-8 PROTEIN ORF45 (MICROBIAL INFECTION)</scope>
</reference>
<reference key="12">
    <citation type="journal article" date="2003" name="J. Exp. Med.">
        <title>LPS-TLR4 signaling to IRF-3/7 and NF-kappaB involves the toll adapters TRAM and TRIF.</title>
        <authorList>
            <person name="Fitzgerald K.A."/>
            <person name="Rowe D.C."/>
            <person name="Barnes B.J."/>
            <person name="Caffrey D.R."/>
            <person name="Visintin A."/>
            <person name="Latz E."/>
            <person name="Monks B."/>
            <person name="Pitha P.M."/>
            <person name="Golenbock D.T."/>
        </authorList>
    </citation>
    <scope>INTERACTION WITH TICAM2</scope>
</reference>
<reference key="13">
    <citation type="journal article" date="2003" name="J. Exp. Med.">
        <authorList>
            <person name="Fitzgerald K.A."/>
            <person name="Rowe D.C."/>
            <person name="Barnes B.J."/>
            <person name="Caffrey D.R."/>
            <person name="Visintin A."/>
            <person name="Latz E."/>
            <person name="Monks B."/>
            <person name="Pitha P.M."/>
            <person name="Golenbock D.T."/>
        </authorList>
    </citation>
    <scope>ERRATUM OF PUBMED:14517278</scope>
</reference>
<reference key="14">
    <citation type="journal article" date="2004" name="J. Biol. Chem.">
        <title>Mechanisms of the TRIF-induced interferon-stimulated response element and NF-kappaB activation and apoptosis pathways.</title>
        <authorList>
            <person name="Han K.J."/>
            <person name="Su X."/>
            <person name="Xu L.-G."/>
            <person name="Bin L.H."/>
            <person name="Zhang J."/>
            <person name="Shu H.-B."/>
        </authorList>
    </citation>
    <scope>INTERACTION WITH TICAM1</scope>
</reference>
<reference key="15">
    <citation type="journal article" date="2004" name="Genome Biol.">
        <title>An unappreciated role for RNA surveillance.</title>
        <authorList>
            <person name="Hillman R.T."/>
            <person name="Green R.E."/>
            <person name="Brenner S.E."/>
        </authorList>
    </citation>
    <scope>SPLICE ISOFORM(S) THAT ARE POTENTIAL NMD TARGET(S)</scope>
</reference>
<reference key="16">
    <citation type="journal article" date="2004" name="J. Virol.">
        <title>Activation of TBK1 and IKKvarepsilon kinases by vesicular stomatitis virus infection and the role of viral ribonucleoprotein in the development of interferon antiviral immunity.</title>
        <authorList>
            <person name="tenOever B.R."/>
            <person name="Sharma S."/>
            <person name="Zou W."/>
            <person name="Sun Q."/>
            <person name="Grandvaux N."/>
            <person name="Julkunen I."/>
            <person name="Hemmi H."/>
            <person name="Yamamoto M."/>
            <person name="Akira S."/>
            <person name="Yeh W.C."/>
            <person name="Lin R."/>
            <person name="Hiscott J."/>
        </authorList>
    </citation>
    <scope>PHOSPHORYLATION AT SER-477 AND SER-479 BY TBK1 AND IKKE</scope>
    <scope>MUTAGENESIS OF 477-SER--SER-479</scope>
</reference>
<reference key="17">
    <citation type="journal article" date="2004" name="Proc. Natl. Acad. Sci. U.S.A.">
        <title>Role of a transductional-transcriptional processor complex involving MyD88 and IRF-7 in Toll-like receptor signaling.</title>
        <authorList>
            <person name="Honda K."/>
            <person name="Yanai H."/>
            <person name="Mizutani T."/>
            <person name="Negishi H."/>
            <person name="Shimada N."/>
            <person name="Suzuki N."/>
            <person name="Ohba Y."/>
            <person name="Takaoka A."/>
            <person name="Yeh W.C."/>
            <person name="Taniguchi T."/>
        </authorList>
    </citation>
    <scope>SUBCELLULAR LOCATION</scope>
    <scope>INTERACTION WITH MYD88</scope>
</reference>
<reference key="18">
    <citation type="journal article" date="2004" name="Nat. Immunol.">
        <title>Interferon-alpha induction through Toll-like receptors involves a direct interaction of IRF7 with MyD88 and TRAF6.</title>
        <authorList>
            <person name="Kawai T."/>
            <person name="Sato S."/>
            <person name="Ishii K.J."/>
            <person name="Coban C."/>
            <person name="Hemmi H."/>
            <person name="Yamamoto M."/>
            <person name="Terai K."/>
            <person name="Matsuda M."/>
            <person name="Inoue J."/>
            <person name="Uematsu S."/>
            <person name="Takeuchi O."/>
            <person name="Akira S."/>
        </authorList>
    </citation>
    <scope>FUNCTION</scope>
    <scope>SUBCELLULAR LOCATION</scope>
    <scope>INTERACTION WITH MYD88 AND TRAF6</scope>
</reference>
<reference key="19">
    <citation type="journal article" date="2005" name="J. Exp. Med.">
        <title>Interleukin-1 receptor-associated kinase-1 plays an essential role for Toll-like receptor (TLR)7- and TLR9-mediated interferon-{alpha} induction.</title>
        <authorList>
            <person name="Uematsu S."/>
            <person name="Sato S."/>
            <person name="Yamamoto M."/>
            <person name="Hirotani T."/>
            <person name="Kato H."/>
            <person name="Takeshita F."/>
            <person name="Matsuda M."/>
            <person name="Coban C."/>
            <person name="Ishii K.J."/>
            <person name="Kawai T."/>
            <person name="Takeuchi O."/>
            <person name="Akira S."/>
        </authorList>
    </citation>
    <scope>PHOSPHORYLATION BY IRAK1</scope>
</reference>
<reference key="20">
    <citation type="journal article" date="2006" name="Biochem. Pharmacol.">
        <title>Distinct functions of IRF-3 and IRF-7 in IFN-alpha gene regulation and control of anti-tumor activity in primary macrophages.</title>
        <authorList>
            <person name="Solis M."/>
            <person name="Goubau D."/>
            <person name="Romieu-Mourez R."/>
            <person name="Genin P."/>
            <person name="Civas A."/>
            <person name="Hiscott J."/>
        </authorList>
    </citation>
    <scope>REVIEW ON FUNCTION</scope>
</reference>
<reference key="21">
    <citation type="journal article" date="2006" name="Immunity">
        <title>Type I interferon gene induction by the interferon regulatory factor family of transcription factors.</title>
        <authorList>
            <person name="Honda K."/>
            <person name="Takaoka A."/>
            <person name="Taniguchi T."/>
        </authorList>
    </citation>
    <scope>REVIEW ON FUNCTION</scope>
</reference>
<reference key="22">
    <citation type="journal article" date="2006" name="Immunity">
        <authorList>
            <person name="Honda K."/>
            <person name="Takaoka A."/>
            <person name="Taniguchi T."/>
        </authorList>
    </citation>
    <scope>ERRATUM OF PUBMED:16979567</scope>
</reference>
<reference key="23">
    <citation type="journal article" date="2007" name="Ann. N. Y. Acad. Sci.">
        <title>IRF-7: new role in the regulation of genes involved in adaptive immunity.</title>
        <authorList>
            <person name="Sgarbanti M."/>
            <person name="Marsili G."/>
            <person name="Remoli A.L."/>
            <person name="Orsatti R."/>
            <person name="Battistini A."/>
        </authorList>
    </citation>
    <scope>FUNCTION</scope>
</reference>
<reference key="24">
    <citation type="journal article" date="2007" name="J. Virol.">
        <title>Rotavirus NSP1 inhibits expression of type I interferon by antagonizing the function of interferon regulatory factors IRF3, IRF5, and IRF7.</title>
        <authorList>
            <person name="Barro M."/>
            <person name="Patton J.T."/>
        </authorList>
    </citation>
    <scope>INTERACTION WITH ROTAVIRUS A NSP1 (MICROBIAL INFECTION)</scope>
</reference>
<reference key="25">
    <citation type="journal article" date="2008" name="Proc. Natl. Acad. Sci. U.S.A.">
        <title>IRF7 activation by Epstein-Barr virus latent membrane protein 1 requires localization at activation sites and TRAF6, but not TRAF2 or TRAF3.</title>
        <authorList>
            <person name="Song Y.J."/>
            <person name="Izumi K.M."/>
            <person name="Shinners N.P."/>
            <person name="Gewurz B.E."/>
            <person name="Kieff E."/>
        </authorList>
    </citation>
    <scope>INTERACTION WITH EPSTEIN-BARR VIRUS/EBV LMP1 (MICROBIAL INFECTION)</scope>
</reference>
<reference key="26">
    <citation type="journal article" date="2009" name="J. Virol.">
        <title>Epstein-Barr virus LF2: an antagonist to type I interferon.</title>
        <authorList>
            <person name="Wu L."/>
            <person name="Fossum E."/>
            <person name="Joo C.H."/>
            <person name="Inn K.S."/>
            <person name="Shin Y.C."/>
            <person name="Johannsen E."/>
            <person name="Hutt-Fletcher L.M."/>
            <person name="Hass J."/>
            <person name="Jung J.U."/>
        </authorList>
    </citation>
    <scope>INTERACTION WITH EPSTEIN-BARR VIRUS/EBV LF2 (MICROBIAL INFECTION)</scope>
</reference>
<reference key="27">
    <citation type="journal article" date="2009" name="PLoS Pathog.">
        <title>Ebola Zaire virus blocks type I interferon production by exploiting the host SUMO modification machinery.</title>
        <authorList>
            <person name="Chang T.H."/>
            <person name="Kubota T."/>
            <person name="Matsuoka M."/>
            <person name="Jones S."/>
            <person name="Bradfute S.B."/>
            <person name="Bray M."/>
            <person name="Ozato K."/>
        </authorList>
    </citation>
    <scope>INTERACTION WITH EBOLAVIRUS VP35 (MICROBIAL INFECTION)</scope>
</reference>
<reference key="28">
    <citation type="journal article" date="2010" name="Cancer Immunol. Immunother.">
        <title>Regulation of immunity and oncogenesis by the IRF transcription factor family.</title>
        <authorList>
            <person name="Savitsky D."/>
            <person name="Tamura T."/>
            <person name="Yanai H."/>
            <person name="Taniguchi T."/>
        </authorList>
    </citation>
    <scope>REVIEW ON FUNCTION</scope>
</reference>
<reference key="29">
    <citation type="journal article" date="2010" name="Immunity">
        <title>The ubiquitin E3 ligase RAUL negatively regulates type i interferon through ubiquitination of the transcription factors IRF7 and IRF3.</title>
        <authorList>
            <person name="Yu Y."/>
            <person name="Hayward G.S."/>
        </authorList>
    </citation>
    <scope>UBIQUITINATION</scope>
</reference>
<reference key="30">
    <citation type="journal article" date="2011" name="Genes Immun.">
        <title>IRF7: activation, regulation, modification and function.</title>
        <authorList>
            <person name="Ning S."/>
            <person name="Pagano J.S."/>
            <person name="Barber G.N."/>
        </authorList>
    </citation>
    <scope>REVIEW ON FUNCTION</scope>
</reference>
<reference key="31">
    <citation type="journal article" date="2011" name="J. Immunol.">
        <title>Tripartite motif-containing protein 28 is a small ubiquitin-related modifier E3 ligase and negative regulator of IFN regulatory factor 7.</title>
        <authorList>
            <person name="Liang Q."/>
            <person name="Deng H."/>
            <person name="Li X."/>
            <person name="Wu X."/>
            <person name="Tang Q."/>
            <person name="Chang T.H."/>
            <person name="Peng H."/>
            <person name="Rauscher F.J. III"/>
            <person name="Ozato K."/>
            <person name="Zhu F."/>
        </authorList>
    </citation>
    <scope>SUMOYLATION AT LYS-444 AND LYS-446 BY TRIM28</scope>
</reference>
<reference key="32">
    <citation type="journal article" date="2015" name="FEBS Lett.">
        <title>TRIM35 negatively regulates TLR7- and TLR9-mediated type I interferon production by targeting IRF7.</title>
        <authorList>
            <person name="Wang Y."/>
            <person name="Yan S."/>
            <person name="Yang B."/>
            <person name="Wang Y."/>
            <person name="Zhou H."/>
            <person name="Lian Q."/>
            <person name="Sun B."/>
        </authorList>
    </citation>
    <scope>INTERACTION WITH TRIM35</scope>
    <scope>UBIQUITINATION</scope>
</reference>
<reference key="33">
    <citation type="journal article" date="2016" name="J. Virol.">
        <title>3C Protease of Enterovirus D68 Inhibits Cellular Defense Mediated by Interferon Regulatory Factor 7.</title>
        <authorList>
            <person name="Xiang Z."/>
            <person name="Liu L."/>
            <person name="Lei X."/>
            <person name="Zhou Z."/>
            <person name="He B."/>
            <person name="Wang J."/>
        </authorList>
    </citation>
    <scope>PROTEOLYTIC CLEAVAGE (MICROBIAL INFECTION)</scope>
    <scope>MUTAGENESIS OF GLN-167 AND GLN-189</scope>
</reference>
<reference key="34">
    <citation type="journal article" date="2017" name="J. Virol.">
        <title>Positive and Negative Regulation of Type I Interferons by the Human T Cell Leukemia Virus Antisense Protein HBZ.</title>
        <authorList>
            <person name="Narulla M.S."/>
            <person name="Alasiri A."/>
            <person name="Charmier L."/>
            <person name="Noonan S."/>
            <person name="Conroy D."/>
            <person name="Hall W.W."/>
            <person name="Sheehy N."/>
        </authorList>
    </citation>
    <scope>INTERACTION WITH HUMAN T-CELL LEUKEMIA VIRUS 1/HTLV-1 PROTEIN HBZ (MICROBIAL INFECTION)</scope>
</reference>
<reference key="35">
    <citation type="journal article" date="2017" name="J. Virol.">
        <title>Human Metapneumovirus M2-2 Protein Acts as a Negative Regulator of Alpha Interferon Production by Plasmacytoid Dendritic Cells.</title>
        <authorList>
            <person name="Kitagawa Y."/>
            <person name="Sakai M."/>
            <person name="Funayama M."/>
            <person name="Itoh M."/>
            <person name="Gotoh B."/>
        </authorList>
    </citation>
    <scope>FUNCTION</scope>
    <scope>INTERACTION WITH HUMAN METAPNEUMOVIRUS M2-2 (MICROBIAL INFECTION)</scope>
    <scope>PHOSPHORYLATION AT SER-477</scope>
</reference>
<reference key="36">
    <citation type="journal article" date="2013" name="J. Virol.">
        <title>Cleavage of interferon regulatory factor 7 by enterovirus 71 3C suppresses cellular responses.</title>
        <authorList>
            <person name="Lei X."/>
            <person name="Xiao X."/>
            <person name="Xue Q."/>
            <person name="Jin Q."/>
            <person name="He B."/>
            <person name="Wang J."/>
        </authorList>
    </citation>
    <scope>PROTEOLYTIC CLEAVAGE (MICROBIAL INFECTION)</scope>
    <scope>MUTAGENESIS OF GLN-151; GLN-167; GLN-185; GLN-188; GLN-189 AND GLN-215</scope>
</reference>
<reference key="37">
    <citation type="journal article" date="2017" name="Biochem. Biophys. Res. Commun.">
        <title>KSHV-encoded viral interferon regulatory factor 4 (vIRF4) interacts with IRF7 and inhibits interferon alpha production.</title>
        <authorList>
            <person name="Hwang S.W."/>
            <person name="Kim D."/>
            <person name="Jung J.U."/>
            <person name="Lee H.R."/>
        </authorList>
    </citation>
    <scope>FUNCTION</scope>
    <scope>INTERACTION WITH HERPES VIRUS 8/HHV-8 PROTEIN VIRF-4 (MICROBIAL INFECTION)</scope>
</reference>
<reference key="38">
    <citation type="journal article" date="2018" name="Virology">
        <title>Seneca Valley Virus 3Cpro abrogates the IRF3- and IRF7-mediated innate immune response by degrading IRF3 and IRF7.</title>
        <authorList>
            <person name="Xue Q."/>
            <person name="Liu H."/>
            <person name="Zhu Z."/>
            <person name="Yang F."/>
            <person name="Ma L."/>
            <person name="Cai X."/>
            <person name="Xue Q."/>
            <person name="Zheng H."/>
        </authorList>
    </citation>
    <scope>INTERACTION WITH SENECA VALLEY VIRUS PROTEASE 3C (MICROBIAL INFECTION)</scope>
</reference>
<reference key="39">
    <citation type="journal article" date="2019" name="J. Immunol.">
        <title>Suppression of the IFN-alpha and -beta Induction through Sequestering IRF7 into Viral Inclusion Bodies by Nonstructural Protein NSs in Severe Fever with Thrombocytopenia Syndrome Bunyavirus Infection.</title>
        <authorList>
            <person name="Hong Y."/>
            <person name="Bai M."/>
            <person name="Qi X."/>
            <person name="Li C."/>
            <person name="Liang M."/>
            <person name="Li D."/>
            <person name="Cardona C.J."/>
            <person name="Xing Z."/>
        </authorList>
    </citation>
    <scope>INTERACTION WITH SFTSV VIRUS NSS (MICROBIAL INFECTION)</scope>
</reference>
<reference key="40">
    <citation type="journal article" date="2022" name="FASEB J.">
        <title>E3 ubiquitin ligase NEURL3 promotes innate antiviral response through catalyzing K63-linked ubiquitination of IRF7.</title>
        <authorList>
            <person name="Qi F."/>
            <person name="Zhang X."/>
            <person name="Wang L."/>
            <person name="Ren C."/>
            <person name="Zhao X."/>
            <person name="Luo J."/>
            <person name="Lu D."/>
        </authorList>
    </citation>
    <scope>UBIQUITINATION BY NEURL3 AT LYS-375</scope>
    <scope>MUTAGENESIS OF LYS-375</scope>
</reference>
<reference evidence="39" key="41">
    <citation type="journal article" date="2007" name="Cell">
        <title>An atomic model of the interferon-beta enhanceosome.</title>
        <authorList>
            <person name="Panne D."/>
            <person name="Maniatis T."/>
            <person name="Harrison S.C."/>
        </authorList>
    </citation>
    <scope>X-RAY CRYSTALLOGRAPHY (2.80 ANGSTROMS) OF 8-125 IN COMPLEX WITH IRF3 AND DNA</scope>
    <scope>SUBUNIT</scope>
    <scope>FUNCTION</scope>
</reference>
<reference key="42">
    <citation type="journal article" date="2015" name="Science">
        <title>Infectious disease. Life-threatening influenza and impaired interferon amplification in human IRF7 deficiency.</title>
        <authorList>
            <person name="Ciancanelli M.J."/>
            <person name="Huang S.X."/>
            <person name="Luthra P."/>
            <person name="Garner H."/>
            <person name="Itan Y."/>
            <person name="Volpi S."/>
            <person name="Lafaille F.G."/>
            <person name="Trouillet C."/>
            <person name="Schmolke M."/>
            <person name="Albrecht R.A."/>
            <person name="Israelsson E."/>
            <person name="Lim H.K."/>
            <person name="Casadio M."/>
            <person name="Hermesh T."/>
            <person name="Lorenzo L."/>
            <person name="Leung L.W."/>
            <person name="Pedergnana V."/>
            <person name="Boisson B."/>
            <person name="Okada S."/>
            <person name="Picard C."/>
            <person name="Ringuier B."/>
            <person name="Troussier F."/>
            <person name="Chaussabel D."/>
            <person name="Abel L."/>
            <person name="Pellier I."/>
            <person name="Notarangelo L.D."/>
            <person name="Garcia-Sastre A."/>
            <person name="Basler C.F."/>
            <person name="Geissmann F."/>
            <person name="Zhang S.Y."/>
            <person name="Snoeck H.W."/>
            <person name="Casanova J.L."/>
        </authorList>
    </citation>
    <scope>INVOLVEMENT IN IMD39</scope>
    <scope>VARIANT IMD39 VAL-410</scope>
    <scope>CHARACTERIZATION OF VARIANT IMD39 VAL-410</scope>
</reference>
<reference key="43">
    <citation type="journal article" date="2020" name="Science">
        <title>Inborn errors of type I IFN immunity in patients with life-threatening COVID-19.</title>
        <authorList>
            <consortium name="COVID-STORM Clinicians"/>
            <consortium name="COVID Clinicians"/>
            <consortium name="Imagine COVID Group"/>
            <consortium name="French COVID Cohort Study Group"/>
            <consortium name="CoV-Contact Cohort"/>
            <consortium name="Amsterdam UMC Covid-19 Biobank"/>
            <consortium name="COVID Human Genetic Effort"/>
            <consortium name="NIAID-USUHS/TAGC COVID Immunity Group"/>
            <person name="Zhang Q."/>
            <person name="Bastard P."/>
            <person name="Liu Z."/>
            <person name="Le Pen J."/>
            <person name="Moncada-Velez M."/>
            <person name="Chen J."/>
            <person name="Ogishi M."/>
            <person name="Sabli I.K.D."/>
            <person name="Hodeib S."/>
            <person name="Korol C."/>
            <person name="Rosain J."/>
            <person name="Bilguvar K."/>
            <person name="Ye J."/>
            <person name="Bolze A."/>
            <person name="Bigio B."/>
            <person name="Yang R."/>
            <person name="Arias A.A."/>
            <person name="Zhou Q."/>
            <person name="Zhang Y."/>
            <person name="Onodi F."/>
            <person name="Korniotis S."/>
            <person name="Karpf L."/>
            <person name="Philippot Q."/>
            <person name="Chbihi M."/>
            <person name="Bonnet-Madin L."/>
            <person name="Dorgham K."/>
            <person name="Smith N."/>
            <person name="Schneider W.M."/>
            <person name="Razooky B.S."/>
            <person name="Hoffmann H.H."/>
            <person name="Michailidis E."/>
            <person name="Moens L."/>
            <person name="Han J.E."/>
            <person name="Lorenzo L."/>
            <person name="Bizien L."/>
            <person name="Meade P."/>
            <person name="Neehus A.L."/>
            <person name="Ugurbil A.C."/>
            <person name="Corneau A."/>
            <person name="Kerner G."/>
            <person name="Zhang P."/>
            <person name="Rapaport F."/>
            <person name="Seeleuthner Y."/>
            <person name="Manry J."/>
            <person name="Masson C."/>
            <person name="Schmitt Y."/>
            <person name="Schlueter A."/>
            <person name="Le Voyer T."/>
            <person name="Khan T."/>
            <person name="Li J."/>
            <person name="Fellay J."/>
            <person name="Roussel L."/>
            <person name="Shahrooei M."/>
            <person name="Alosaimi M.F."/>
            <person name="Mansouri D."/>
            <person name="Al-Saud H."/>
            <person name="Al-Mulla F."/>
            <person name="Almourfi F."/>
            <person name="Al-Muhsen S.Z."/>
            <person name="Alsohime F."/>
            <person name="Al Turki S."/>
            <person name="Hasanato R."/>
            <person name="van de Beek D."/>
            <person name="Biondi A."/>
            <person name="Bettini L.R."/>
            <person name="D'Angio' M."/>
            <person name="Bonfanti P."/>
            <person name="Imberti L."/>
            <person name="Sottini A."/>
            <person name="Paghera S."/>
            <person name="Quiros-Roldan E."/>
            <person name="Rossi C."/>
            <person name="Oler A.J."/>
            <person name="Tompkins M.F."/>
            <person name="Alba C."/>
            <person name="Vandernoot I."/>
            <person name="Goffard J.C."/>
            <person name="Smits G."/>
            <person name="Migeotte I."/>
            <person name="Haerynck F."/>
            <person name="Soler-Palacin P."/>
            <person name="Martin-Nalda A."/>
            <person name="Colobran R."/>
            <person name="Morange P.E."/>
            <person name="Keles S."/>
            <person name="Coelkesen F."/>
            <person name="Ozcelik T."/>
            <person name="Yasar K.K."/>
            <person name="Senoglu S."/>
            <person name="Karabela S.N."/>
            <person name="Rodriguez-Gallego C."/>
            <person name="Novelli G."/>
            <person name="Hraiech S."/>
            <person name="Tandjaoui-Lambiotte Y."/>
            <person name="Duval X."/>
            <person name="Laouenan C."/>
            <person name="Snow A.L."/>
            <person name="Dalgard C.L."/>
            <person name="Milner J.D."/>
            <person name="Vinh D.C."/>
            <person name="Mogensen T.H."/>
            <person name="Marr N."/>
            <person name="Spaan A.N."/>
            <person name="Boisson B."/>
            <person name="Boisson-Dupuis S."/>
            <person name="Bustamante J."/>
            <person name="Puel A."/>
            <person name="Ciancanelli M.J."/>
            <person name="Meyts I."/>
            <person name="Maniatis T."/>
            <person name="Soumelis V."/>
            <person name="Amara A."/>
            <person name="Nussenzweig M."/>
            <person name="Garcia-Sastre A."/>
            <person name="Krammer F."/>
            <person name="Pujol A."/>
            <person name="Duffy D."/>
            <person name="Lifton R.P."/>
            <person name="Zhang S.Y."/>
            <person name="Gorochov G."/>
            <person name="Beziat V."/>
            <person name="Jouanguy E."/>
            <person name="Sancho-Shimizu V."/>
            <person name="Rice C.M."/>
            <person name="Abel L."/>
            <person name="Notarangelo L.D."/>
            <person name="Cobat A."/>
            <person name="Su H.C."/>
            <person name="Casanova J.L."/>
        </authorList>
    </citation>
    <scope>VARIANTS HIS-37; SER-95; ASN-117; ARG-133; 185-GLN--ALA-503 DEL; LEU-214; ALA-254; GLN-369; VAL-371; VAL-410; THR-419 AND 421-GLN--ALA-503 DEL</scope>
    <scope>CHARACTERIZATION OF VARIANTS HIS-37; SER-95; ASN-117; ARG-133; 185-GLN--ALA-503 DEL; LEU-214; ALA-254; GLN-369; VAL-371; VAL-410; THR-419 AND 421-GLN--ALA-503 DEL</scope>
    <scope>FUNCTION</scope>
</reference>
<protein>
    <recommendedName>
        <fullName>Interferon regulatory factor 7</fullName>
        <shortName>IRF-7</shortName>
    </recommendedName>
</protein>
<feature type="chain" id="PRO_0000154562" description="Interferon regulatory factor 7">
    <location>
        <begin position="1"/>
        <end position="503"/>
    </location>
</feature>
<feature type="DNA-binding region" description="IRF tryptophan pentad repeat" evidence="2">
    <location>
        <begin position="11"/>
        <end position="126"/>
    </location>
</feature>
<feature type="region of interest" description="Disordered" evidence="3">
    <location>
        <begin position="69"/>
        <end position="88"/>
    </location>
</feature>
<feature type="region of interest" description="Disordered" evidence="3">
    <location>
        <begin position="133"/>
        <end position="156"/>
    </location>
</feature>
<feature type="region of interest" description="Disordered" evidence="3">
    <location>
        <begin position="242"/>
        <end position="277"/>
    </location>
</feature>
<feature type="region of interest" description="Necessary for the interaction with NMI" evidence="1">
    <location>
        <begin position="284"/>
        <end position="456"/>
    </location>
</feature>
<feature type="compositionally biased region" description="Pro residues" evidence="3">
    <location>
        <begin position="146"/>
        <end position="156"/>
    </location>
</feature>
<feature type="site" description="(Microbial infection) Cleavage; by viral EV68 protease 3C" evidence="25">
    <location>
        <begin position="167"/>
        <end position="168"/>
    </location>
</feature>
<feature type="site" description="(Microbial infection) Cleavage; by viral EV 71 protease 3C and EV68 protease 3C" evidence="22 25">
    <location>
        <begin position="189"/>
        <end position="190"/>
    </location>
</feature>
<feature type="modified residue" description="N6-acetyllysine; by KAT2A and KAT2B" evidence="7">
    <location>
        <position position="92"/>
    </location>
</feature>
<feature type="modified residue" description="Phosphoserine" evidence="1">
    <location>
        <position position="471"/>
    </location>
</feature>
<feature type="modified residue" description="Phosphoserine" evidence="1">
    <location>
        <position position="472"/>
    </location>
</feature>
<feature type="modified residue" description="Phosphoserine" evidence="1">
    <location>
        <position position="475"/>
    </location>
</feature>
<feature type="modified residue" description="Phosphoserine; by TBK1 and IKKE" evidence="11 27">
    <location>
        <position position="477"/>
    </location>
</feature>
<feature type="modified residue" description="Phosphoserine; by TBK1 and IKKE" evidence="11">
    <location>
        <position position="479"/>
    </location>
</feature>
<feature type="modified residue" description="Phosphoserine" evidence="1">
    <location>
        <position position="483"/>
    </location>
</feature>
<feature type="modified residue" description="Phosphoserine" evidence="1">
    <location>
        <position position="484"/>
    </location>
</feature>
<feature type="modified residue" description="Phosphoserine" evidence="1">
    <location>
        <position position="487"/>
    </location>
</feature>
<feature type="cross-link" description="Glycyl lysine isopeptide (Lys-Gly) (interchain with G-Cter in ubiquitin)">
    <location>
        <position position="375"/>
    </location>
</feature>
<feature type="cross-link" description="Glycyl lysine isopeptide (Lys-Gly) (interchain with G-Cter in SUMO)">
    <location>
        <position position="444"/>
    </location>
</feature>
<feature type="cross-link" description="Glycyl lysine isopeptide (Lys-Gly) (interchain with G-Cter in SUMO)">
    <location>
        <position position="446"/>
    </location>
</feature>
<feature type="splice variant" id="VSP_002757" description="In isoform D." evidence="35 37">
    <original>MALAPE</original>
    <variation>MPVPERPAAGPDSPRPGTR</variation>
    <location>
        <begin position="1"/>
        <end position="6"/>
    </location>
</feature>
<feature type="splice variant" id="VSP_002758" description="In isoform C." evidence="36">
    <original>GGPPGPFLAHTHA</original>
    <variation>AQGSLLGSCTGGQ</variation>
    <location>
        <begin position="152"/>
        <end position="164"/>
    </location>
</feature>
<feature type="splice variant" id="VSP_002759" description="In isoform C." evidence="36">
    <location>
        <begin position="165"/>
        <end position="503"/>
    </location>
</feature>
<feature type="splice variant" id="VSP_002760" description="In isoform B." evidence="36">
    <location>
        <begin position="228"/>
        <end position="256"/>
    </location>
</feature>
<feature type="sequence variant" id="VAR_084074" description="No effect on IFNB induction upon Sendai virus infection." evidence="31">
    <original>R</original>
    <variation>H</variation>
    <location>
        <position position="37"/>
    </location>
</feature>
<feature type="sequence variant" id="VAR_084075" description="Abolished IFNB induction upon Sendai virus infection." evidence="31">
    <original>F</original>
    <variation>S</variation>
    <location>
        <position position="95"/>
    </location>
</feature>
<feature type="sequence variant" id="VAR_084076" description="Abolished IFNB induction upon Sendai virus infection." evidence="31">
    <original>D</original>
    <variation>N</variation>
    <location>
        <position position="117"/>
    </location>
</feature>
<feature type="sequence variant" id="VAR_084077" description="No effect on IFNB induction upon Sendai virus infection." evidence="31">
    <original>G</original>
    <variation>R</variation>
    <location>
        <position position="133"/>
    </location>
</feature>
<feature type="sequence variant" id="VAR_027957" description="In dbSNP:rs1061502." evidence="33 34">
    <original>K</original>
    <variation>E</variation>
    <location>
        <position position="179"/>
    </location>
</feature>
<feature type="sequence variant" id="VAR_084078" description="Abolishes IFNB induction upon Sendai virus infection." evidence="31">
    <location>
        <begin position="185"/>
        <end position="503"/>
    </location>
</feature>
<feature type="sequence variant" id="VAR_061273" description="In dbSNP:rs41313489.">
    <original>D</original>
    <variation>N</variation>
    <location>
        <position position="204"/>
    </location>
</feature>
<feature type="sequence variant" id="VAR_084079" description="No effect on IFNB induction upon Sendai virus infection; requires 2 nucleotide substitutions." evidence="31">
    <original>G</original>
    <variation>L</variation>
    <location>
        <position position="214"/>
    </location>
</feature>
<feature type="sequence variant" id="VAR_084080" description="No effect IFNB induction upon Sendai virus infection." evidence="31">
    <original>T</original>
    <variation>A</variation>
    <location>
        <position position="254"/>
    </location>
</feature>
<feature type="sequence variant" id="VAR_084081" description="No effect on IFNB induction upon Sendai virus infection." evidence="31">
    <original>R</original>
    <variation>Q</variation>
    <location>
        <position position="369"/>
    </location>
</feature>
<feature type="sequence variant" id="VAR_084082" description="Decreased IFNB induction upon Sendai virus infection." evidence="31">
    <original>M</original>
    <variation>V</variation>
    <location>
        <position position="371"/>
    </location>
</feature>
<feature type="sequence variant" id="VAR_073779" description="In IMD39; loss of function mutation; shows abnormal localization to the cytoplasm rather than the nucleus; abolished IFNB induction upon Sendai virus infection; dbSNP:rs786205223." evidence="23 31">
    <original>F</original>
    <variation>V</variation>
    <location>
        <position position="410"/>
    </location>
</feature>
<feature type="sequence variant" id="VAR_034017" description="In dbSNP:rs1131665." evidence="33">
    <original>Q</original>
    <variation>R</variation>
    <location>
        <position position="412"/>
    </location>
</feature>
<feature type="sequence variant" id="VAR_084083" description="No effect on IFNB induction upon Sendai virus infection." evidence="31">
    <original>A</original>
    <variation>T</variation>
    <location>
        <position position="419"/>
    </location>
</feature>
<feature type="sequence variant" id="VAR_084084" description="Abolished IFNB induction upon Sendai virus infection." evidence="31">
    <location>
        <begin position="421"/>
        <end position="503"/>
    </location>
</feature>
<feature type="mutagenesis site" description="Loss of acetylation, increased DNA-binding and activity; when associated with R-93." evidence="7">
    <original>G</original>
    <variation>T</variation>
    <location>
        <position position="90"/>
    </location>
</feature>
<feature type="mutagenesis site" description="Loss of acetylation, DNA-binding and activity." evidence="7">
    <original>K</original>
    <variation>R</variation>
    <location>
        <position position="92"/>
    </location>
</feature>
<feature type="mutagenesis site" description="Loss of acetylation, increased DNA-binding and activity; when associated with T-90." evidence="7">
    <original>T</original>
    <variation>R</variation>
    <location>
        <position position="93"/>
    </location>
</feature>
<feature type="mutagenesis site" description="No effect on cleavage by enterovirus 71." evidence="22">
    <original>Q</original>
    <variation>A</variation>
    <location>
        <position position="151"/>
    </location>
</feature>
<feature type="mutagenesis site" description="Complete loss of inactivation of IFN-I production; when associated with R-189." evidence="25">
    <original>Q</original>
    <variation>A</variation>
    <location>
        <position position="167"/>
    </location>
</feature>
<feature type="mutagenesis site" description="No effect on cleavage by enterovirus 71." evidence="22">
    <original>Q</original>
    <variation>A</variation>
    <location>
        <position position="167"/>
    </location>
</feature>
<feature type="mutagenesis site" description="No effect on cleavage by enterovirus 71." evidence="22">
    <original>Q</original>
    <variation>A</variation>
    <location>
        <position position="185"/>
    </location>
</feature>
<feature type="mutagenesis site" description="No effect on cleavage by enterovirus 71." evidence="22">
    <original>Q</original>
    <variation>A</variation>
    <location>
        <position position="188"/>
    </location>
</feature>
<feature type="mutagenesis site" description="Complete loss of cleavage by enterovirus 71." evidence="22">
    <original>Q</original>
    <variation>A</variation>
    <location>
        <position position="189"/>
    </location>
</feature>
<feature type="mutagenesis site" description="Complete loss of inactivation of IFN-I production; when associated with A-167." evidence="25">
    <original>Q</original>
    <variation>R</variation>
    <location>
        <position position="189"/>
    </location>
</feature>
<feature type="mutagenesis site" description="No effect on cleavage by enterovirus 71." evidence="22">
    <original>Q</original>
    <variation>A</variation>
    <location>
        <position position="215"/>
    </location>
</feature>
<feature type="mutagenesis site" description="Loss of NEURL3-mediated ubiquitination." evidence="32">
    <original>K</original>
    <variation>R</variation>
    <location>
        <position position="375"/>
    </location>
</feature>
<feature type="mutagenesis site" description="Complete loss of TBK1 and IKKE phosphorylation." evidence="11">
    <original>SLS</original>
    <variation>ALA</variation>
    <location>
        <begin position="477"/>
        <end position="479"/>
    </location>
</feature>
<feature type="helix" evidence="40">
    <location>
        <begin position="14"/>
        <end position="24"/>
    </location>
</feature>
<feature type="strand" evidence="40">
    <location>
        <begin position="31"/>
        <end position="36"/>
    </location>
</feature>
<feature type="strand" evidence="40">
    <location>
        <begin position="39"/>
        <end position="43"/>
    </location>
</feature>
<feature type="helix" evidence="40">
    <location>
        <begin position="55"/>
        <end position="57"/>
    </location>
</feature>
<feature type="helix" evidence="40">
    <location>
        <begin position="58"/>
        <end position="66"/>
    </location>
</feature>
<feature type="helix" evidence="40">
    <location>
        <begin position="84"/>
        <end position="102"/>
    </location>
</feature>
<feature type="strand" evidence="40">
    <location>
        <begin position="105"/>
        <end position="112"/>
    </location>
</feature>
<feature type="strand" evidence="40">
    <location>
        <begin position="119"/>
        <end position="125"/>
    </location>
</feature>
<gene>
    <name type="primary">IRF7</name>
</gene>
<evidence type="ECO:0000250" key="1">
    <source>
        <dbReference type="UniProtKB" id="P70434"/>
    </source>
</evidence>
<evidence type="ECO:0000255" key="2">
    <source>
        <dbReference type="PROSITE-ProRule" id="PRU00840"/>
    </source>
</evidence>
<evidence type="ECO:0000256" key="3">
    <source>
        <dbReference type="SAM" id="MobiDB-lite"/>
    </source>
</evidence>
<evidence type="ECO:0000269" key="4">
    <source>
    </source>
</evidence>
<evidence type="ECO:0000269" key="5">
    <source>
    </source>
</evidence>
<evidence type="ECO:0000269" key="6">
    <source>
    </source>
</evidence>
<evidence type="ECO:0000269" key="7">
    <source>
    </source>
</evidence>
<evidence type="ECO:0000269" key="8">
    <source>
    </source>
</evidence>
<evidence type="ECO:0000269" key="9">
    <source>
    </source>
</evidence>
<evidence type="ECO:0000269" key="10">
    <source>
    </source>
</evidence>
<evidence type="ECO:0000269" key="11">
    <source>
    </source>
</evidence>
<evidence type="ECO:0000269" key="12">
    <source>
    </source>
</evidence>
<evidence type="ECO:0000269" key="13">
    <source>
    </source>
</evidence>
<evidence type="ECO:0000269" key="14">
    <source>
    </source>
</evidence>
<evidence type="ECO:0000269" key="15">
    <source>
    </source>
</evidence>
<evidence type="ECO:0000269" key="16">
    <source>
    </source>
</evidence>
<evidence type="ECO:0000269" key="17">
    <source>
    </source>
</evidence>
<evidence type="ECO:0000269" key="18">
    <source>
    </source>
</evidence>
<evidence type="ECO:0000269" key="19">
    <source>
    </source>
</evidence>
<evidence type="ECO:0000269" key="20">
    <source>
    </source>
</evidence>
<evidence type="ECO:0000269" key="21">
    <source>
    </source>
</evidence>
<evidence type="ECO:0000269" key="22">
    <source>
    </source>
</evidence>
<evidence type="ECO:0000269" key="23">
    <source>
    </source>
</evidence>
<evidence type="ECO:0000269" key="24">
    <source>
    </source>
</evidence>
<evidence type="ECO:0000269" key="25">
    <source>
    </source>
</evidence>
<evidence type="ECO:0000269" key="26">
    <source>
    </source>
</evidence>
<evidence type="ECO:0000269" key="27">
    <source>
    </source>
</evidence>
<evidence type="ECO:0000269" key="28">
    <source>
    </source>
</evidence>
<evidence type="ECO:0000269" key="29">
    <source>
    </source>
</evidence>
<evidence type="ECO:0000269" key="30">
    <source>
    </source>
</evidence>
<evidence type="ECO:0000269" key="31">
    <source>
    </source>
</evidence>
<evidence type="ECO:0000269" key="32">
    <source>
    </source>
</evidence>
<evidence type="ECO:0000269" key="33">
    <source>
    </source>
</evidence>
<evidence type="ECO:0000269" key="34">
    <source ref="1"/>
</evidence>
<evidence type="ECO:0000303" key="35">
    <source>
    </source>
</evidence>
<evidence type="ECO:0000303" key="36">
    <source>
    </source>
</evidence>
<evidence type="ECO:0000303" key="37">
    <source>
    </source>
</evidence>
<evidence type="ECO:0000305" key="38"/>
<evidence type="ECO:0007744" key="39">
    <source>
        <dbReference type="PDB" id="2O61"/>
    </source>
</evidence>
<evidence type="ECO:0007829" key="40">
    <source>
        <dbReference type="PDB" id="2O61"/>
    </source>
</evidence>
<proteinExistence type="evidence at protein level"/>
<dbReference type="EMBL" id="U73036">
    <property type="protein sequence ID" value="AAB17190.1"/>
    <property type="molecule type" value="mRNA"/>
</dbReference>
<dbReference type="EMBL" id="U53830">
    <property type="protein sequence ID" value="AAB80686.1"/>
    <property type="molecule type" value="mRNA"/>
</dbReference>
<dbReference type="EMBL" id="U53831">
    <property type="protein sequence ID" value="AAB80688.1"/>
    <property type="molecule type" value="mRNA"/>
</dbReference>
<dbReference type="EMBL" id="U53832">
    <property type="protein sequence ID" value="AAB80690.1"/>
    <property type="molecule type" value="mRNA"/>
</dbReference>
<dbReference type="EMBL" id="U53832">
    <property type="protein sequence ID" value="AAB80691.1"/>
    <property type="molecule type" value="mRNA"/>
</dbReference>
<dbReference type="EMBL" id="AF076494">
    <property type="protein sequence ID" value="AAC70999.1"/>
    <property type="molecule type" value="mRNA"/>
</dbReference>
<dbReference type="EMBL" id="CH471158">
    <property type="protein sequence ID" value="EAX02360.1"/>
    <property type="molecule type" value="Genomic_DNA"/>
</dbReference>
<dbReference type="EMBL" id="BC136555">
    <property type="protein sequence ID" value="AAI36556.1"/>
    <property type="molecule type" value="mRNA"/>
</dbReference>
<dbReference type="CCDS" id="CCDS7703.1">
    <molecule id="Q92985-1"/>
</dbReference>
<dbReference type="CCDS" id="CCDS7704.1">
    <molecule id="Q92985-2"/>
</dbReference>
<dbReference type="CCDS" id="CCDS7705.1">
    <molecule id="Q92985-4"/>
</dbReference>
<dbReference type="RefSeq" id="NP_001563.2">
    <molecule id="Q92985-1"/>
    <property type="nucleotide sequence ID" value="NM_001572.3"/>
</dbReference>
<dbReference type="RefSeq" id="NP_004020.1">
    <molecule id="Q92985-2"/>
    <property type="nucleotide sequence ID" value="NM_004029.4"/>
</dbReference>
<dbReference type="RefSeq" id="NP_004022.2">
    <molecule id="Q92985-4"/>
    <property type="nucleotide sequence ID" value="NM_004031.4"/>
</dbReference>
<dbReference type="RefSeq" id="XP_005252963.1">
    <property type="nucleotide sequence ID" value="XM_005252906.3"/>
</dbReference>
<dbReference type="RefSeq" id="XP_016873163.1">
    <property type="nucleotide sequence ID" value="XM_017017674.1"/>
</dbReference>
<dbReference type="PDB" id="2O61">
    <property type="method" value="X-ray"/>
    <property type="resolution" value="2.80 A"/>
    <property type="chains" value="A=8-125"/>
</dbReference>
<dbReference type="PDBsum" id="2O61"/>
<dbReference type="SMR" id="Q92985"/>
<dbReference type="BioGRID" id="109873">
    <property type="interactions" value="97"/>
</dbReference>
<dbReference type="CORUM" id="Q92985"/>
<dbReference type="DIP" id="DIP-34895N"/>
<dbReference type="FunCoup" id="Q92985">
    <property type="interactions" value="1680"/>
</dbReference>
<dbReference type="IntAct" id="Q92985">
    <property type="interactions" value="58"/>
</dbReference>
<dbReference type="MINT" id="Q92985"/>
<dbReference type="STRING" id="9606.ENSP00000380697"/>
<dbReference type="GlyGen" id="Q92985">
    <property type="glycosylation" value="2 sites, 1 O-linked glycan (1 site)"/>
</dbReference>
<dbReference type="iPTMnet" id="Q92985"/>
<dbReference type="PhosphoSitePlus" id="Q92985"/>
<dbReference type="BioMuta" id="IRF7"/>
<dbReference type="DMDM" id="116242593"/>
<dbReference type="jPOST" id="Q92985"/>
<dbReference type="MassIVE" id="Q92985"/>
<dbReference type="PaxDb" id="9606-ENSP00000380697"/>
<dbReference type="PeptideAtlas" id="Q92985"/>
<dbReference type="ProteomicsDB" id="75643">
    <molecule id="Q92985-1"/>
</dbReference>
<dbReference type="ProteomicsDB" id="75644">
    <molecule id="Q92985-2"/>
</dbReference>
<dbReference type="ProteomicsDB" id="75645">
    <molecule id="Q92985-3"/>
</dbReference>
<dbReference type="ProteomicsDB" id="75646">
    <molecule id="Q92985-4"/>
</dbReference>
<dbReference type="Pumba" id="Q92985"/>
<dbReference type="Antibodypedia" id="4325">
    <property type="antibodies" value="598 antibodies from 40 providers"/>
</dbReference>
<dbReference type="DNASU" id="3665"/>
<dbReference type="Ensembl" id="ENST00000330243.9">
    <molecule id="Q92985-4"/>
    <property type="protein sequence ID" value="ENSP00000329411.5"/>
    <property type="gene ID" value="ENSG00000185507.21"/>
</dbReference>
<dbReference type="Ensembl" id="ENST00000348655.11">
    <molecule id="Q92985-2"/>
    <property type="protein sequence ID" value="ENSP00000331803.9"/>
    <property type="gene ID" value="ENSG00000185507.21"/>
</dbReference>
<dbReference type="Ensembl" id="ENST00000397566.5">
    <molecule id="Q92985-4"/>
    <property type="protein sequence ID" value="ENSP00000380697.1"/>
    <property type="gene ID" value="ENSG00000185507.21"/>
</dbReference>
<dbReference type="Ensembl" id="ENST00000469048.6">
    <molecule id="Q92985-3"/>
    <property type="protein sequence ID" value="ENSP00000434607.1"/>
    <property type="gene ID" value="ENSG00000185507.21"/>
</dbReference>
<dbReference type="Ensembl" id="ENST00000525445.6">
    <molecule id="Q92985-1"/>
    <property type="protein sequence ID" value="ENSP00000434009.2"/>
    <property type="gene ID" value="ENSG00000185507.21"/>
</dbReference>
<dbReference type="Ensembl" id="ENST00000533182.5">
    <molecule id="Q92985-3"/>
    <property type="protein sequence ID" value="ENSP00000433903.1"/>
    <property type="gene ID" value="ENSG00000185507.21"/>
</dbReference>
<dbReference type="Ensembl" id="ENST00000612534.4">
    <molecule id="Q92985-4"/>
    <property type="protein sequence ID" value="ENSP00000479615.1"/>
    <property type="gene ID" value="ENSG00000276561.4"/>
</dbReference>
<dbReference type="Ensembl" id="ENST00000621391.4">
    <molecule id="Q92985-1"/>
    <property type="protein sequence ID" value="ENSP00000480358.1"/>
    <property type="gene ID" value="ENSG00000276561.4"/>
</dbReference>
<dbReference type="Ensembl" id="ENST00000632827.1">
    <molecule id="Q92985-4"/>
    <property type="protein sequence ID" value="ENSP00000488039.1"/>
    <property type="gene ID" value="ENSG00000276561.4"/>
</dbReference>
<dbReference type="Ensembl" id="ENST00000633274.1">
    <molecule id="Q92985-3"/>
    <property type="protein sequence ID" value="ENSP00000488591.1"/>
    <property type="gene ID" value="ENSG00000276561.4"/>
</dbReference>
<dbReference type="Ensembl" id="ENST00000633943.1">
    <molecule id="Q92985-2"/>
    <property type="protein sequence ID" value="ENSP00000488666.1"/>
    <property type="gene ID" value="ENSG00000276561.4"/>
</dbReference>
<dbReference type="Ensembl" id="ENST00000634105.1">
    <molecule id="Q92985-3"/>
    <property type="protein sequence ID" value="ENSP00000488581.1"/>
    <property type="gene ID" value="ENSG00000276561.4"/>
</dbReference>
<dbReference type="GeneID" id="3665"/>
<dbReference type="KEGG" id="hsa:3665"/>
<dbReference type="MANE-Select" id="ENST00000525445.6">
    <property type="protein sequence ID" value="ENSP00000434009.2"/>
    <property type="RefSeq nucleotide sequence ID" value="NM_001572.5"/>
    <property type="RefSeq protein sequence ID" value="NP_001563.2"/>
</dbReference>
<dbReference type="UCSC" id="uc001lqg.3">
    <molecule id="Q92985-1"/>
    <property type="organism name" value="human"/>
</dbReference>
<dbReference type="AGR" id="HGNC:6122"/>
<dbReference type="CTD" id="3665"/>
<dbReference type="DisGeNET" id="3665"/>
<dbReference type="GeneCards" id="IRF7"/>
<dbReference type="HGNC" id="HGNC:6122">
    <property type="gene designation" value="IRF7"/>
</dbReference>
<dbReference type="HPA" id="ENSG00000185507">
    <property type="expression patterns" value="Tissue enhanced (liver, lymphoid tissue)"/>
</dbReference>
<dbReference type="MalaCards" id="IRF7"/>
<dbReference type="MIM" id="605047">
    <property type="type" value="gene"/>
</dbReference>
<dbReference type="MIM" id="616345">
    <property type="type" value="phenotype"/>
</dbReference>
<dbReference type="neXtProt" id="NX_Q92985"/>
<dbReference type="OpenTargets" id="ENSG00000185507"/>
<dbReference type="Orphanet" id="574918">
    <property type="disease" value="Predisposition to severe viral infection due to IRF7 deficiency"/>
</dbReference>
<dbReference type="PharmGKB" id="PA29921"/>
<dbReference type="VEuPathDB" id="HostDB:ENSG00000185507"/>
<dbReference type="eggNOG" id="ENOG502R2I9">
    <property type="taxonomic scope" value="Eukaryota"/>
</dbReference>
<dbReference type="GeneTree" id="ENSGT00940000160931"/>
<dbReference type="HOGENOM" id="CLU_031544_2_0_1"/>
<dbReference type="InParanoid" id="Q92985"/>
<dbReference type="OMA" id="FHENDNI"/>
<dbReference type="OrthoDB" id="9836034at2759"/>
<dbReference type="PAN-GO" id="Q92985">
    <property type="GO annotations" value="5 GO annotations based on evolutionary models"/>
</dbReference>
<dbReference type="PhylomeDB" id="Q92985"/>
<dbReference type="TreeFam" id="TF328512"/>
<dbReference type="PathwayCommons" id="Q92985"/>
<dbReference type="Reactome" id="R-HSA-3134963">
    <property type="pathway name" value="DEx/H-box helicases activate type I IFN and inflammatory cytokines production"/>
</dbReference>
<dbReference type="Reactome" id="R-HSA-877300">
    <property type="pathway name" value="Interferon gamma signaling"/>
</dbReference>
<dbReference type="Reactome" id="R-HSA-9013973">
    <property type="pathway name" value="TICAM1-dependent activation of IRF3/IRF7"/>
</dbReference>
<dbReference type="Reactome" id="R-HSA-909733">
    <property type="pathway name" value="Interferon alpha/beta signaling"/>
</dbReference>
<dbReference type="Reactome" id="R-HSA-918233">
    <property type="pathway name" value="TRAF3-dependent IRF activation pathway"/>
</dbReference>
<dbReference type="Reactome" id="R-HSA-933541">
    <property type="pathway name" value="TRAF6 mediated IRF7 activation"/>
</dbReference>
<dbReference type="Reactome" id="R-HSA-936964">
    <property type="pathway name" value="Activation of IRF3, IRF7 mediated by TBK1, IKKEpsilon (IKBKE)"/>
</dbReference>
<dbReference type="Reactome" id="R-HSA-9705671">
    <property type="pathway name" value="SARS-CoV-2 activates/modulates innate and adaptive immune responses"/>
</dbReference>
<dbReference type="Reactome" id="R-HSA-975110">
    <property type="pathway name" value="TRAF6 mediated IRF7 activation in TLR7/8 or 9 signaling"/>
</dbReference>
<dbReference type="SignaLink" id="Q92985"/>
<dbReference type="SIGNOR" id="Q92985"/>
<dbReference type="BioGRID-ORCS" id="3665">
    <property type="hits" value="17 hits in 1182 CRISPR screens"/>
</dbReference>
<dbReference type="CD-CODE" id="02F8D883">
    <property type="entry name" value="IFN-I transcriptional condensate"/>
</dbReference>
<dbReference type="ChiTaRS" id="IRF7">
    <property type="organism name" value="human"/>
</dbReference>
<dbReference type="GeneWiki" id="IRF7"/>
<dbReference type="GenomeRNAi" id="3665"/>
<dbReference type="Pharos" id="Q92985">
    <property type="development level" value="Tbio"/>
</dbReference>
<dbReference type="PRO" id="PR:Q92985"/>
<dbReference type="Proteomes" id="UP000005640">
    <property type="component" value="Chromosome 11"/>
</dbReference>
<dbReference type="RNAct" id="Q92985">
    <property type="molecule type" value="protein"/>
</dbReference>
<dbReference type="Bgee" id="ENSG00000185507">
    <property type="expression patterns" value="Expressed in granulocyte and 94 other cell types or tissues"/>
</dbReference>
<dbReference type="ExpressionAtlas" id="Q92985">
    <property type="expression patterns" value="baseline and differential"/>
</dbReference>
<dbReference type="GO" id="GO:0000785">
    <property type="term" value="C:chromatin"/>
    <property type="evidence" value="ECO:0000314"/>
    <property type="project" value="UniProt"/>
</dbReference>
<dbReference type="GO" id="GO:0005737">
    <property type="term" value="C:cytoplasm"/>
    <property type="evidence" value="ECO:0000314"/>
    <property type="project" value="AgBase"/>
</dbReference>
<dbReference type="GO" id="GO:0005829">
    <property type="term" value="C:cytosol"/>
    <property type="evidence" value="ECO:0000314"/>
    <property type="project" value="HPA"/>
</dbReference>
<dbReference type="GO" id="GO:0010008">
    <property type="term" value="C:endosome membrane"/>
    <property type="evidence" value="ECO:0000304"/>
    <property type="project" value="Reactome"/>
</dbReference>
<dbReference type="GO" id="GO:0005654">
    <property type="term" value="C:nucleoplasm"/>
    <property type="evidence" value="ECO:0000314"/>
    <property type="project" value="HPA"/>
</dbReference>
<dbReference type="GO" id="GO:0005634">
    <property type="term" value="C:nucleus"/>
    <property type="evidence" value="ECO:0000314"/>
    <property type="project" value="CACAO"/>
</dbReference>
<dbReference type="GO" id="GO:0003677">
    <property type="term" value="F:DNA binding"/>
    <property type="evidence" value="ECO:0000315"/>
    <property type="project" value="UniProtKB"/>
</dbReference>
<dbReference type="GO" id="GO:0000981">
    <property type="term" value="F:DNA-binding transcription factor activity, RNA polymerase II-specific"/>
    <property type="evidence" value="ECO:0000314"/>
    <property type="project" value="UniProtKB"/>
</dbReference>
<dbReference type="GO" id="GO:0000978">
    <property type="term" value="F:RNA polymerase II cis-regulatory region sequence-specific DNA binding"/>
    <property type="evidence" value="ECO:0000314"/>
    <property type="project" value="UniProtKB"/>
</dbReference>
<dbReference type="GO" id="GO:1990837">
    <property type="term" value="F:sequence-specific double-stranded DNA binding"/>
    <property type="evidence" value="ECO:0000314"/>
    <property type="project" value="ARUK-UCL"/>
</dbReference>
<dbReference type="GO" id="GO:0002753">
    <property type="term" value="P:cytoplasmic pattern recognition receptor signaling pathway"/>
    <property type="evidence" value="ECO:0000314"/>
    <property type="project" value="UniProt"/>
</dbReference>
<dbReference type="GO" id="GO:0051607">
    <property type="term" value="P:defense response to virus"/>
    <property type="evidence" value="ECO:0000314"/>
    <property type="project" value="UniProtKB"/>
</dbReference>
<dbReference type="GO" id="GO:0006974">
    <property type="term" value="P:DNA damage response"/>
    <property type="evidence" value="ECO:0000304"/>
    <property type="project" value="UniProtKB"/>
</dbReference>
<dbReference type="GO" id="GO:0019043">
    <property type="term" value="P:establishment of viral latency"/>
    <property type="evidence" value="ECO:0000304"/>
    <property type="project" value="UniProtKB"/>
</dbReference>
<dbReference type="GO" id="GO:0002376">
    <property type="term" value="P:immune system process"/>
    <property type="evidence" value="ECO:0000318"/>
    <property type="project" value="GO_Central"/>
</dbReference>
<dbReference type="GO" id="GO:0016064">
    <property type="term" value="P:immunoglobulin mediated immune response"/>
    <property type="evidence" value="ECO:0007669"/>
    <property type="project" value="Ensembl"/>
</dbReference>
<dbReference type="GO" id="GO:0045087">
    <property type="term" value="P:innate immune response"/>
    <property type="evidence" value="ECO:0000304"/>
    <property type="project" value="UniProtKB"/>
</dbReference>
<dbReference type="GO" id="GO:0039530">
    <property type="term" value="P:MDA-5 signaling pathway"/>
    <property type="evidence" value="ECO:0000304"/>
    <property type="project" value="UniProtKB"/>
</dbReference>
<dbReference type="GO" id="GO:2000110">
    <property type="term" value="P:negative regulation of macrophage apoptotic process"/>
    <property type="evidence" value="ECO:0000304"/>
    <property type="project" value="UniProtKB"/>
</dbReference>
<dbReference type="GO" id="GO:0000122">
    <property type="term" value="P:negative regulation of transcription by RNA polymerase II"/>
    <property type="evidence" value="ECO:0000304"/>
    <property type="project" value="ProtInc"/>
</dbReference>
<dbReference type="GO" id="GO:0045893">
    <property type="term" value="P:positive regulation of DNA-templated transcription"/>
    <property type="evidence" value="ECO:0000315"/>
    <property type="project" value="UniProtKB"/>
</dbReference>
<dbReference type="GO" id="GO:0032727">
    <property type="term" value="P:positive regulation of interferon-alpha production"/>
    <property type="evidence" value="ECO:0000314"/>
    <property type="project" value="BHF-UCL"/>
</dbReference>
<dbReference type="GO" id="GO:0032728">
    <property type="term" value="P:positive regulation of interferon-beta production"/>
    <property type="evidence" value="ECO:0000315"/>
    <property type="project" value="CACAO"/>
</dbReference>
<dbReference type="GO" id="GO:0045944">
    <property type="term" value="P:positive regulation of transcription by RNA polymerase II"/>
    <property type="evidence" value="ECO:0000314"/>
    <property type="project" value="UniProtKB"/>
</dbReference>
<dbReference type="GO" id="GO:0032481">
    <property type="term" value="P:positive regulation of type I interferon production"/>
    <property type="evidence" value="ECO:0000314"/>
    <property type="project" value="UniProt"/>
</dbReference>
<dbReference type="GO" id="GO:0060340">
    <property type="term" value="P:positive regulation of type I interferon-mediated signaling pathway"/>
    <property type="evidence" value="ECO:0007669"/>
    <property type="project" value="Ensembl"/>
</dbReference>
<dbReference type="GO" id="GO:0002819">
    <property type="term" value="P:regulation of adaptive immune response"/>
    <property type="evidence" value="ECO:0000314"/>
    <property type="project" value="UniProtKB"/>
</dbReference>
<dbReference type="GO" id="GO:0050776">
    <property type="term" value="P:regulation of immune response"/>
    <property type="evidence" value="ECO:0000304"/>
    <property type="project" value="UniProtKB"/>
</dbReference>
<dbReference type="GO" id="GO:0045655">
    <property type="term" value="P:regulation of monocyte differentiation"/>
    <property type="evidence" value="ECO:0000304"/>
    <property type="project" value="UniProtKB"/>
</dbReference>
<dbReference type="GO" id="GO:0034124">
    <property type="term" value="P:regulation of MyD88-dependent toll-like receptor signaling pathway"/>
    <property type="evidence" value="ECO:0000250"/>
    <property type="project" value="UniProtKB"/>
</dbReference>
<dbReference type="GO" id="GO:0034127">
    <property type="term" value="P:regulation of MyD88-independent toll-like receptor signaling pathway"/>
    <property type="evidence" value="ECO:0000250"/>
    <property type="project" value="UniProtKB"/>
</dbReference>
<dbReference type="GO" id="GO:0006357">
    <property type="term" value="P:regulation of transcription by RNA polymerase II"/>
    <property type="evidence" value="ECO:0000318"/>
    <property type="project" value="GO_Central"/>
</dbReference>
<dbReference type="GO" id="GO:0032479">
    <property type="term" value="P:regulation of type I interferon production"/>
    <property type="evidence" value="ECO:0000304"/>
    <property type="project" value="UniProtKB"/>
</dbReference>
<dbReference type="GO" id="GO:0009615">
    <property type="term" value="P:response to virus"/>
    <property type="evidence" value="ECO:0000304"/>
    <property type="project" value="UniProtKB"/>
</dbReference>
<dbReference type="GO" id="GO:0060337">
    <property type="term" value="P:type I interferon-mediated signaling pathway"/>
    <property type="evidence" value="ECO:0007669"/>
    <property type="project" value="Ensembl"/>
</dbReference>
<dbReference type="CDD" id="cd00103">
    <property type="entry name" value="IRF"/>
    <property type="match status" value="1"/>
</dbReference>
<dbReference type="FunFam" id="1.10.10.10:FF:000375">
    <property type="entry name" value="Interferon regulatory factor 7"/>
    <property type="match status" value="1"/>
</dbReference>
<dbReference type="FunFam" id="2.60.200.10:FF:000007">
    <property type="entry name" value="Interferon regulatory factor 7"/>
    <property type="match status" value="1"/>
</dbReference>
<dbReference type="Gene3D" id="2.60.200.10">
    <property type="match status" value="1"/>
</dbReference>
<dbReference type="Gene3D" id="1.10.10.10">
    <property type="entry name" value="Winged helix-like DNA-binding domain superfamily/Winged helix DNA-binding domain"/>
    <property type="match status" value="1"/>
</dbReference>
<dbReference type="IDEAL" id="IID00491"/>
<dbReference type="InterPro" id="IPR019817">
    <property type="entry name" value="Interferon_reg_fac_CS"/>
</dbReference>
<dbReference type="InterPro" id="IPR001346">
    <property type="entry name" value="Interferon_reg_fact_DNA-bd_dom"/>
</dbReference>
<dbReference type="InterPro" id="IPR019471">
    <property type="entry name" value="Interferon_reg_factor-3"/>
</dbReference>
<dbReference type="InterPro" id="IPR017855">
    <property type="entry name" value="SMAD-like_dom_sf"/>
</dbReference>
<dbReference type="InterPro" id="IPR008984">
    <property type="entry name" value="SMAD_FHA_dom_sf"/>
</dbReference>
<dbReference type="InterPro" id="IPR036388">
    <property type="entry name" value="WH-like_DNA-bd_sf"/>
</dbReference>
<dbReference type="InterPro" id="IPR036390">
    <property type="entry name" value="WH_DNA-bd_sf"/>
</dbReference>
<dbReference type="PANTHER" id="PTHR11949">
    <property type="entry name" value="INTERFERON REGULATORY FACTOR"/>
    <property type="match status" value="1"/>
</dbReference>
<dbReference type="PANTHER" id="PTHR11949:SF2">
    <property type="entry name" value="INTERFERON REGULATORY FACTOR 7"/>
    <property type="match status" value="1"/>
</dbReference>
<dbReference type="Pfam" id="PF00605">
    <property type="entry name" value="IRF"/>
    <property type="match status" value="1"/>
</dbReference>
<dbReference type="Pfam" id="PF10401">
    <property type="entry name" value="IRF-3"/>
    <property type="match status" value="1"/>
</dbReference>
<dbReference type="PRINTS" id="PR00267">
    <property type="entry name" value="INTFRNREGFCT"/>
</dbReference>
<dbReference type="SMART" id="SM00348">
    <property type="entry name" value="IRF"/>
    <property type="match status" value="1"/>
</dbReference>
<dbReference type="SMART" id="SM01243">
    <property type="entry name" value="IRF-3"/>
    <property type="match status" value="1"/>
</dbReference>
<dbReference type="SUPFAM" id="SSF49879">
    <property type="entry name" value="SMAD/FHA domain"/>
    <property type="match status" value="1"/>
</dbReference>
<dbReference type="SUPFAM" id="SSF46785">
    <property type="entry name" value="Winged helix' DNA-binding domain"/>
    <property type="match status" value="1"/>
</dbReference>
<dbReference type="PROSITE" id="PS00601">
    <property type="entry name" value="IRF_1"/>
    <property type="match status" value="1"/>
</dbReference>
<dbReference type="PROSITE" id="PS51507">
    <property type="entry name" value="IRF_2"/>
    <property type="match status" value="1"/>
</dbReference>